<proteinExistence type="evidence at protein level"/>
<comment type="function">
    <text evidence="3 4">Effector that suppresses flg22-induced post-translational MAP kinase activation both tomato and Arabidopsis. The perception of highly conserved pathogen- or microbe-associated molecular patterns (PAMPs/MAMPs), such as flg22, triggers converging signaling pathways recruiting MAP kinase cascades and inducing transcriptional re-programming, yielding a generic antimicrobial response (PubMed:24763622). Associates with calmodulin to interfere with plant defense-associated calcium signaling in hosts (PubMed:30984224).</text>
</comment>
<comment type="subunit">
    <text evidence="4">Interacts with the host calmodulin.</text>
</comment>
<comment type="subcellular location">
    <subcellularLocation>
        <location evidence="3">Secreted</location>
    </subcellularLocation>
    <subcellularLocation>
        <location evidence="3">Host nucleus</location>
    </subcellularLocation>
    <subcellularLocation>
        <location evidence="3">Host cytoplasm</location>
    </subcellularLocation>
</comment>
<comment type="domain">
    <text evidence="7">The RxLR-dEER motif acts to carry the protein into the host cell cytoplasm through binding to cell surface phosphatidylinositol-3-phosphate.</text>
</comment>
<comment type="domain">
    <text evidence="1">The amino acids 78-82 in the C-terminal region of are important for binding to host calmodulin.</text>
</comment>
<comment type="similarity">
    <text evidence="6">Belongs to the RxLR effector family.</text>
</comment>
<protein>
    <recommendedName>
        <fullName evidence="5">RxLR effector protein SFI8</fullName>
    </recommendedName>
    <alternativeName>
        <fullName evidence="5">Suppressor of early Flg22-induced immune response 8</fullName>
    </alternativeName>
</protein>
<dbReference type="EMBL" id="DS028242">
    <property type="protein sequence ID" value="EEY54138.1"/>
    <property type="molecule type" value="Genomic_DNA"/>
</dbReference>
<dbReference type="RefSeq" id="XP_002895922.1">
    <property type="nucleotide sequence ID" value="XM_002895876.1"/>
</dbReference>
<dbReference type="STRING" id="403677.D0P1B2"/>
<dbReference type="EnsemblProtists" id="PITG_20303T0">
    <property type="protein sequence ID" value="PITG_20303T0"/>
    <property type="gene ID" value="PITG_20303"/>
</dbReference>
<dbReference type="GeneID" id="9469961"/>
<dbReference type="KEGG" id="pif:PITG_20303"/>
<dbReference type="VEuPathDB" id="FungiDB:PITG_20303"/>
<dbReference type="HOGENOM" id="CLU_158959_0_0_1"/>
<dbReference type="InParanoid" id="D0P1B2"/>
<dbReference type="OMA" id="ANXALAI"/>
<dbReference type="OrthoDB" id="127916at2759"/>
<dbReference type="PHI-base" id="PHI:10784"/>
<dbReference type="PHI-base" id="PHI:4207"/>
<dbReference type="Proteomes" id="UP000006643">
    <property type="component" value="Partially assembled WGS sequence"/>
</dbReference>
<dbReference type="GO" id="GO:0005576">
    <property type="term" value="C:extracellular region"/>
    <property type="evidence" value="ECO:0007669"/>
    <property type="project" value="UniProtKB-SubCell"/>
</dbReference>
<dbReference type="GO" id="GO:0030430">
    <property type="term" value="C:host cell cytoplasm"/>
    <property type="evidence" value="ECO:0007669"/>
    <property type="project" value="UniProtKB-SubCell"/>
</dbReference>
<dbReference type="GO" id="GO:0042025">
    <property type="term" value="C:host cell nucleus"/>
    <property type="evidence" value="ECO:0007669"/>
    <property type="project" value="UniProtKB-SubCell"/>
</dbReference>
<keyword id="KW-1035">Host cytoplasm</keyword>
<keyword id="KW-1048">Host nucleus</keyword>
<keyword id="KW-1185">Reference proteome</keyword>
<keyword id="KW-0964">Secreted</keyword>
<keyword id="KW-0732">Signal</keyword>
<keyword id="KW-0843">Virulence</keyword>
<evidence type="ECO:0000250" key="1">
    <source>
        <dbReference type="UniProtKB" id="D0P1A8"/>
    </source>
</evidence>
<evidence type="ECO:0000255" key="2"/>
<evidence type="ECO:0000269" key="3">
    <source>
    </source>
</evidence>
<evidence type="ECO:0000269" key="4">
    <source>
    </source>
</evidence>
<evidence type="ECO:0000303" key="5">
    <source>
    </source>
</evidence>
<evidence type="ECO:0000305" key="6"/>
<evidence type="ECO:0000305" key="7">
    <source>
    </source>
</evidence>
<sequence>MRSILYAVLAFAVLARSSAVAAFPIPDESRPLSKTSPDTGATRSLRVEAQEVIQSGRGDGYGGFWKNVFPSTNKIIKKPDIKISKLIAAAKKAKAKMTKS</sequence>
<feature type="signal peptide" evidence="2">
    <location>
        <begin position="1"/>
        <end position="22"/>
    </location>
</feature>
<feature type="chain" id="PRO_5003013855" description="RxLR effector protein SFI8">
    <location>
        <begin position="23"/>
        <end position="100"/>
    </location>
</feature>
<feature type="short sequence motif" description="RxLR-dEER" evidence="7">
    <location>
        <begin position="43"/>
        <end position="57"/>
    </location>
</feature>
<feature type="short sequence motif" description="Calmodulin-binding motif" evidence="1">
    <location>
        <begin position="78"/>
        <end position="82"/>
    </location>
</feature>
<name>SFI8_PHYIT</name>
<accession>D0P1B2</accession>
<gene>
    <name evidence="5" type="primary">SFI8</name>
    <name type="ORF">PITG_20303</name>
</gene>
<reference key="1">
    <citation type="journal article" date="2009" name="Nature">
        <title>Genome sequence and analysis of the Irish potato famine pathogen Phytophthora infestans.</title>
        <authorList>
            <consortium name="The Broad Institute Genome Sequencing Platform"/>
            <person name="Haas B.J."/>
            <person name="Kamoun S."/>
            <person name="Zody M.C."/>
            <person name="Jiang R.H."/>
            <person name="Handsaker R.E."/>
            <person name="Cano L.M."/>
            <person name="Grabherr M."/>
            <person name="Kodira C.D."/>
            <person name="Raffaele S."/>
            <person name="Torto-Alalibo T."/>
            <person name="Bozkurt T.O."/>
            <person name="Ah-Fong A.M."/>
            <person name="Alvarado L."/>
            <person name="Anderson V.L."/>
            <person name="Armstrong M.R."/>
            <person name="Avrova A."/>
            <person name="Baxter L."/>
            <person name="Beynon J."/>
            <person name="Boevink P.C."/>
            <person name="Bollmann S.R."/>
            <person name="Bos J.I."/>
            <person name="Bulone V."/>
            <person name="Cai G."/>
            <person name="Cakir C."/>
            <person name="Carrington J.C."/>
            <person name="Chawner M."/>
            <person name="Conti L."/>
            <person name="Costanzo S."/>
            <person name="Ewan R."/>
            <person name="Fahlgren N."/>
            <person name="Fischbach M.A."/>
            <person name="Fugelstad J."/>
            <person name="Gilroy E.M."/>
            <person name="Gnerre S."/>
            <person name="Green P.J."/>
            <person name="Grenville-Briggs L.J."/>
            <person name="Griffith J."/>
            <person name="Grunwald N.J."/>
            <person name="Horn K."/>
            <person name="Horner N.R."/>
            <person name="Hu C.H."/>
            <person name="Huitema E."/>
            <person name="Jeong D.H."/>
            <person name="Jones A.M."/>
            <person name="Jones J.D."/>
            <person name="Jones R.W."/>
            <person name="Karlsson E.K."/>
            <person name="Kunjeti S.G."/>
            <person name="Lamour K."/>
            <person name="Liu Z."/>
            <person name="Ma L."/>
            <person name="Maclean D."/>
            <person name="Chibucos M.C."/>
            <person name="McDonald H."/>
            <person name="McWalters J."/>
            <person name="Meijer H.J."/>
            <person name="Morgan W."/>
            <person name="Morris P.F."/>
            <person name="Munro C.A."/>
            <person name="O'Neill K."/>
            <person name="Ospina-Giraldo M."/>
            <person name="Pinzon A."/>
            <person name="Pritchard L."/>
            <person name="Ramsahoye B."/>
            <person name="Ren Q."/>
            <person name="Restrepo S."/>
            <person name="Roy S."/>
            <person name="Sadanandom A."/>
            <person name="Savidor A."/>
            <person name="Schornack S."/>
            <person name="Schwartz D.C."/>
            <person name="Schumann U.D."/>
            <person name="Schwessinger B."/>
            <person name="Seyer L."/>
            <person name="Sharpe T."/>
            <person name="Silvar C."/>
            <person name="Song J."/>
            <person name="Studholme D.J."/>
            <person name="Sykes S."/>
            <person name="Thines M."/>
            <person name="van de Vondervoort P.J."/>
            <person name="Phuntumart V."/>
            <person name="Wawra S."/>
            <person name="Weide R."/>
            <person name="Win J."/>
            <person name="Young C."/>
            <person name="Zhou S."/>
            <person name="Fry W."/>
            <person name="Meyers B.C."/>
            <person name="van West P."/>
            <person name="Ristaino J."/>
            <person name="Govers F."/>
            <person name="Birch P.R."/>
            <person name="Whisson S.C."/>
            <person name="Judelson H.S."/>
            <person name="Nusbaum C."/>
        </authorList>
    </citation>
    <scope>NUCLEOTIDE SEQUENCE [LARGE SCALE GENOMIC DNA]</scope>
    <source>
        <strain>T30-4</strain>
    </source>
</reference>
<reference key="2">
    <citation type="journal article" date="2014" name="PLoS Pathog.">
        <title>Functionally redundant RXLR effectors from Phytophthora infestans act at different steps to suppress early flg22-triggered immunity.</title>
        <authorList>
            <person name="Zheng X."/>
            <person name="McLellan H."/>
            <person name="Fraiture M."/>
            <person name="Liu X."/>
            <person name="Boevink P.C."/>
            <person name="Gilroy E.M."/>
            <person name="Chen Y."/>
            <person name="Kandel K."/>
            <person name="Sessa G."/>
            <person name="Birch P.R."/>
            <person name="Brunner F."/>
        </authorList>
    </citation>
    <scope>FUNCTION</scope>
    <scope>SUBCELLULAR LOCATION</scope>
</reference>
<reference key="3">
    <citation type="journal article" date="2019" name="Front. Plant Sci.">
        <title>The Phytophthora RXLR Effector Avrblb2 Modulates Plant Immunity by Interfering With Ca2+ Signaling Pathway.</title>
        <authorList>
            <person name="Naveed Z.A."/>
            <person name="Bibi S."/>
            <person name="Ali G.S."/>
        </authorList>
    </citation>
    <scope>INTERACTION WITH HOST CALMODULIN</scope>
    <scope>FUNCTION</scope>
</reference>
<organism>
    <name type="scientific">Phytophthora infestans (strain T30-4)</name>
    <name type="common">Potato late blight agent</name>
    <dbReference type="NCBI Taxonomy" id="403677"/>
    <lineage>
        <taxon>Eukaryota</taxon>
        <taxon>Sar</taxon>
        <taxon>Stramenopiles</taxon>
        <taxon>Oomycota</taxon>
        <taxon>Peronosporales</taxon>
        <taxon>Peronosporaceae</taxon>
        <taxon>Phytophthora</taxon>
    </lineage>
</organism>